<keyword id="KW-0479">Metal-binding</keyword>
<keyword id="KW-0533">Nickel</keyword>
<keyword id="KW-1185">Reference proteome</keyword>
<keyword id="KW-0862">Zinc</keyword>
<reference key="1">
    <citation type="journal article" date="2009" name="PLoS ONE">
        <title>Complete genome sequence of the aerobic CO-oxidizing thermophile Thermomicrobium roseum.</title>
        <authorList>
            <person name="Wu D."/>
            <person name="Raymond J."/>
            <person name="Wu M."/>
            <person name="Chatterji S."/>
            <person name="Ren Q."/>
            <person name="Graham J.E."/>
            <person name="Bryant D.A."/>
            <person name="Robb F."/>
            <person name="Colman A."/>
            <person name="Tallon L.J."/>
            <person name="Badger J.H."/>
            <person name="Madupu R."/>
            <person name="Ward N.L."/>
            <person name="Eisen J.A."/>
        </authorList>
    </citation>
    <scope>NUCLEOTIDE SEQUENCE [LARGE SCALE GENOMIC DNA]</scope>
    <source>
        <strain>ATCC 27502 / DSM 5159 / P-2</strain>
    </source>
</reference>
<sequence length="131" mass="13629">MHELSVALSLIDALTESLGTHPDVRIEVIHLKIGPLSGVIEPALRSAFEIAAVGTIAEGAILAIQVPPIVLRCEECGQETNLSGADVMDNRDGLGSWISWLPPACPACGAAALTVVGGRELELVAAEVRRG</sequence>
<protein>
    <recommendedName>
        <fullName evidence="1">Hydrogenase maturation factor HypA</fullName>
    </recommendedName>
</protein>
<accession>B9L1X1</accession>
<dbReference type="EMBL" id="CP001275">
    <property type="protein sequence ID" value="ACM06028.1"/>
    <property type="molecule type" value="Genomic_DNA"/>
</dbReference>
<dbReference type="RefSeq" id="WP_015922813.1">
    <property type="nucleotide sequence ID" value="NC_011959.1"/>
</dbReference>
<dbReference type="SMR" id="B9L1X1"/>
<dbReference type="STRING" id="309801.trd_1871"/>
<dbReference type="KEGG" id="tro:trd_1871"/>
<dbReference type="eggNOG" id="COG0375">
    <property type="taxonomic scope" value="Bacteria"/>
</dbReference>
<dbReference type="HOGENOM" id="CLU_126929_6_0_0"/>
<dbReference type="OrthoDB" id="9800361at2"/>
<dbReference type="Proteomes" id="UP000000447">
    <property type="component" value="Chromosome"/>
</dbReference>
<dbReference type="GO" id="GO:0016151">
    <property type="term" value="F:nickel cation binding"/>
    <property type="evidence" value="ECO:0007669"/>
    <property type="project" value="UniProtKB-UniRule"/>
</dbReference>
<dbReference type="GO" id="GO:0008270">
    <property type="term" value="F:zinc ion binding"/>
    <property type="evidence" value="ECO:0007669"/>
    <property type="project" value="UniProtKB-UniRule"/>
</dbReference>
<dbReference type="GO" id="GO:0051604">
    <property type="term" value="P:protein maturation"/>
    <property type="evidence" value="ECO:0007669"/>
    <property type="project" value="InterPro"/>
</dbReference>
<dbReference type="GO" id="GO:0036211">
    <property type="term" value="P:protein modification process"/>
    <property type="evidence" value="ECO:0007669"/>
    <property type="project" value="UniProtKB-UniRule"/>
</dbReference>
<dbReference type="Gene3D" id="3.30.2320.80">
    <property type="match status" value="1"/>
</dbReference>
<dbReference type="HAMAP" id="MF_00213">
    <property type="entry name" value="HypA_HybF"/>
    <property type="match status" value="1"/>
</dbReference>
<dbReference type="InterPro" id="IPR020538">
    <property type="entry name" value="Hydgase_Ni_incorp_HypA/HybF_CS"/>
</dbReference>
<dbReference type="InterPro" id="IPR000688">
    <property type="entry name" value="HypA/HybF"/>
</dbReference>
<dbReference type="PANTHER" id="PTHR34535">
    <property type="entry name" value="HYDROGENASE MATURATION FACTOR HYPA"/>
    <property type="match status" value="1"/>
</dbReference>
<dbReference type="PANTHER" id="PTHR34535:SF3">
    <property type="entry name" value="HYDROGENASE MATURATION FACTOR HYPA"/>
    <property type="match status" value="1"/>
</dbReference>
<dbReference type="Pfam" id="PF01155">
    <property type="entry name" value="HypA"/>
    <property type="match status" value="1"/>
</dbReference>
<dbReference type="PIRSF" id="PIRSF004761">
    <property type="entry name" value="Hydrgn_mat_HypA"/>
    <property type="match status" value="1"/>
</dbReference>
<dbReference type="PROSITE" id="PS01249">
    <property type="entry name" value="HYPA"/>
    <property type="match status" value="1"/>
</dbReference>
<feature type="chain" id="PRO_1000124779" description="Hydrogenase maturation factor HypA">
    <location>
        <begin position="1"/>
        <end position="131"/>
    </location>
</feature>
<feature type="binding site" evidence="1">
    <location>
        <position position="2"/>
    </location>
    <ligand>
        <name>Ni(2+)</name>
        <dbReference type="ChEBI" id="CHEBI:49786"/>
    </ligand>
</feature>
<feature type="binding site" evidence="1">
    <location>
        <position position="73"/>
    </location>
    <ligand>
        <name>Zn(2+)</name>
        <dbReference type="ChEBI" id="CHEBI:29105"/>
    </ligand>
</feature>
<feature type="binding site" evidence="1">
    <location>
        <position position="76"/>
    </location>
    <ligand>
        <name>Zn(2+)</name>
        <dbReference type="ChEBI" id="CHEBI:29105"/>
    </ligand>
</feature>
<feature type="binding site" evidence="1">
    <location>
        <position position="105"/>
    </location>
    <ligand>
        <name>Zn(2+)</name>
        <dbReference type="ChEBI" id="CHEBI:29105"/>
    </ligand>
</feature>
<feature type="binding site" evidence="1">
    <location>
        <position position="108"/>
    </location>
    <ligand>
        <name>Zn(2+)</name>
        <dbReference type="ChEBI" id="CHEBI:29105"/>
    </ligand>
</feature>
<evidence type="ECO:0000255" key="1">
    <source>
        <dbReference type="HAMAP-Rule" id="MF_00213"/>
    </source>
</evidence>
<gene>
    <name evidence="1" type="primary">hypA</name>
    <name type="ordered locus">trd_1871</name>
</gene>
<name>HYPA_THERP</name>
<comment type="function">
    <text evidence="1">Involved in the maturation of [NiFe] hydrogenases. Required for nickel insertion into the metal center of the hydrogenase.</text>
</comment>
<comment type="similarity">
    <text evidence="1">Belongs to the HypA/HybF family.</text>
</comment>
<proteinExistence type="inferred from homology"/>
<organism>
    <name type="scientific">Thermomicrobium roseum (strain ATCC 27502 / DSM 5159 / P-2)</name>
    <dbReference type="NCBI Taxonomy" id="309801"/>
    <lineage>
        <taxon>Bacteria</taxon>
        <taxon>Pseudomonadati</taxon>
        <taxon>Thermomicrobiota</taxon>
        <taxon>Thermomicrobia</taxon>
        <taxon>Thermomicrobiales</taxon>
        <taxon>Thermomicrobiaceae</taxon>
        <taxon>Thermomicrobium</taxon>
    </lineage>
</organism>